<reference key="1">
    <citation type="journal article" date="2012" name="BMC Genomics">
        <title>Comparative genomics and transcriptomics of lineages I, II, and III strains of Listeria monocytogenes.</title>
        <authorList>
            <person name="Hain T."/>
            <person name="Ghai R."/>
            <person name="Billion A."/>
            <person name="Kuenne C.T."/>
            <person name="Steinweg C."/>
            <person name="Izar B."/>
            <person name="Mohamed W."/>
            <person name="Mraheil M."/>
            <person name="Domann E."/>
            <person name="Schaffrath S."/>
            <person name="Karst U."/>
            <person name="Goesmann A."/>
            <person name="Oehm S."/>
            <person name="Puhler A."/>
            <person name="Merkl R."/>
            <person name="Vorwerk S."/>
            <person name="Glaser P."/>
            <person name="Garrido P."/>
            <person name="Rusniok C."/>
            <person name="Buchrieser C."/>
            <person name="Goebel W."/>
            <person name="Chakraborty T."/>
        </authorList>
    </citation>
    <scope>NUCLEOTIDE SEQUENCE [LARGE SCALE GENOMIC DNA]</scope>
    <source>
        <strain>CLIP80459</strain>
    </source>
</reference>
<feature type="chain" id="PRO_1000214452" description="Large ribosomal subunit protein uL2">
    <location>
        <begin position="1"/>
        <end position="277"/>
    </location>
</feature>
<feature type="region of interest" description="Disordered" evidence="2">
    <location>
        <begin position="24"/>
        <end position="55"/>
    </location>
</feature>
<feature type="region of interest" description="Disordered" evidence="2">
    <location>
        <begin position="221"/>
        <end position="277"/>
    </location>
</feature>
<dbReference type="EMBL" id="FM242711">
    <property type="protein sequence ID" value="CAS06350.1"/>
    <property type="molecule type" value="Genomic_DNA"/>
</dbReference>
<dbReference type="RefSeq" id="WP_003727696.1">
    <property type="nucleotide sequence ID" value="NC_012488.1"/>
</dbReference>
<dbReference type="SMR" id="C1KZH7"/>
<dbReference type="GeneID" id="93236051"/>
<dbReference type="KEGG" id="lmc:Lm4b_02596"/>
<dbReference type="HOGENOM" id="CLU_036235_2_1_9"/>
<dbReference type="GO" id="GO:0015934">
    <property type="term" value="C:large ribosomal subunit"/>
    <property type="evidence" value="ECO:0007669"/>
    <property type="project" value="InterPro"/>
</dbReference>
<dbReference type="GO" id="GO:0019843">
    <property type="term" value="F:rRNA binding"/>
    <property type="evidence" value="ECO:0007669"/>
    <property type="project" value="UniProtKB-UniRule"/>
</dbReference>
<dbReference type="GO" id="GO:0003735">
    <property type="term" value="F:structural constituent of ribosome"/>
    <property type="evidence" value="ECO:0007669"/>
    <property type="project" value="InterPro"/>
</dbReference>
<dbReference type="GO" id="GO:0016740">
    <property type="term" value="F:transferase activity"/>
    <property type="evidence" value="ECO:0007669"/>
    <property type="project" value="InterPro"/>
</dbReference>
<dbReference type="GO" id="GO:0002181">
    <property type="term" value="P:cytoplasmic translation"/>
    <property type="evidence" value="ECO:0007669"/>
    <property type="project" value="TreeGrafter"/>
</dbReference>
<dbReference type="FunFam" id="2.30.30.30:FF:000001">
    <property type="entry name" value="50S ribosomal protein L2"/>
    <property type="match status" value="1"/>
</dbReference>
<dbReference type="FunFam" id="2.40.50.140:FF:000003">
    <property type="entry name" value="50S ribosomal protein L2"/>
    <property type="match status" value="1"/>
</dbReference>
<dbReference type="FunFam" id="4.10.950.10:FF:000001">
    <property type="entry name" value="50S ribosomal protein L2"/>
    <property type="match status" value="1"/>
</dbReference>
<dbReference type="Gene3D" id="2.30.30.30">
    <property type="match status" value="1"/>
</dbReference>
<dbReference type="Gene3D" id="2.40.50.140">
    <property type="entry name" value="Nucleic acid-binding proteins"/>
    <property type="match status" value="1"/>
</dbReference>
<dbReference type="Gene3D" id="4.10.950.10">
    <property type="entry name" value="Ribosomal protein L2, domain 3"/>
    <property type="match status" value="1"/>
</dbReference>
<dbReference type="HAMAP" id="MF_01320_B">
    <property type="entry name" value="Ribosomal_uL2_B"/>
    <property type="match status" value="1"/>
</dbReference>
<dbReference type="InterPro" id="IPR012340">
    <property type="entry name" value="NA-bd_OB-fold"/>
</dbReference>
<dbReference type="InterPro" id="IPR014722">
    <property type="entry name" value="Rib_uL2_dom2"/>
</dbReference>
<dbReference type="InterPro" id="IPR002171">
    <property type="entry name" value="Ribosomal_uL2"/>
</dbReference>
<dbReference type="InterPro" id="IPR005880">
    <property type="entry name" value="Ribosomal_uL2_bac/org-type"/>
</dbReference>
<dbReference type="InterPro" id="IPR022669">
    <property type="entry name" value="Ribosomal_uL2_C"/>
</dbReference>
<dbReference type="InterPro" id="IPR022671">
    <property type="entry name" value="Ribosomal_uL2_CS"/>
</dbReference>
<dbReference type="InterPro" id="IPR014726">
    <property type="entry name" value="Ribosomal_uL2_dom3"/>
</dbReference>
<dbReference type="InterPro" id="IPR022666">
    <property type="entry name" value="Ribosomal_uL2_RNA-bd_dom"/>
</dbReference>
<dbReference type="InterPro" id="IPR008991">
    <property type="entry name" value="Translation_prot_SH3-like_sf"/>
</dbReference>
<dbReference type="NCBIfam" id="TIGR01171">
    <property type="entry name" value="rplB_bact"/>
    <property type="match status" value="1"/>
</dbReference>
<dbReference type="PANTHER" id="PTHR13691:SF5">
    <property type="entry name" value="LARGE RIBOSOMAL SUBUNIT PROTEIN UL2M"/>
    <property type="match status" value="1"/>
</dbReference>
<dbReference type="PANTHER" id="PTHR13691">
    <property type="entry name" value="RIBOSOMAL PROTEIN L2"/>
    <property type="match status" value="1"/>
</dbReference>
<dbReference type="Pfam" id="PF00181">
    <property type="entry name" value="Ribosomal_L2"/>
    <property type="match status" value="1"/>
</dbReference>
<dbReference type="Pfam" id="PF03947">
    <property type="entry name" value="Ribosomal_L2_C"/>
    <property type="match status" value="1"/>
</dbReference>
<dbReference type="PIRSF" id="PIRSF002158">
    <property type="entry name" value="Ribosomal_L2"/>
    <property type="match status" value="1"/>
</dbReference>
<dbReference type="SMART" id="SM01383">
    <property type="entry name" value="Ribosomal_L2"/>
    <property type="match status" value="1"/>
</dbReference>
<dbReference type="SMART" id="SM01382">
    <property type="entry name" value="Ribosomal_L2_C"/>
    <property type="match status" value="1"/>
</dbReference>
<dbReference type="SUPFAM" id="SSF50249">
    <property type="entry name" value="Nucleic acid-binding proteins"/>
    <property type="match status" value="1"/>
</dbReference>
<dbReference type="SUPFAM" id="SSF50104">
    <property type="entry name" value="Translation proteins SH3-like domain"/>
    <property type="match status" value="1"/>
</dbReference>
<dbReference type="PROSITE" id="PS00467">
    <property type="entry name" value="RIBOSOMAL_L2"/>
    <property type="match status" value="1"/>
</dbReference>
<keyword id="KW-0687">Ribonucleoprotein</keyword>
<keyword id="KW-0689">Ribosomal protein</keyword>
<keyword id="KW-0694">RNA-binding</keyword>
<keyword id="KW-0699">rRNA-binding</keyword>
<accession>C1KZH7</accession>
<proteinExistence type="inferred from homology"/>
<organism>
    <name type="scientific">Listeria monocytogenes serotype 4b (strain CLIP80459)</name>
    <dbReference type="NCBI Taxonomy" id="568819"/>
    <lineage>
        <taxon>Bacteria</taxon>
        <taxon>Bacillati</taxon>
        <taxon>Bacillota</taxon>
        <taxon>Bacilli</taxon>
        <taxon>Bacillales</taxon>
        <taxon>Listeriaceae</taxon>
        <taxon>Listeria</taxon>
    </lineage>
</organism>
<protein>
    <recommendedName>
        <fullName evidence="1">Large ribosomal subunit protein uL2</fullName>
    </recommendedName>
    <alternativeName>
        <fullName evidence="3">50S ribosomal protein L2</fullName>
    </alternativeName>
</protein>
<sequence>MAIKKYKPTTNGRRHMTSSDFAEITTSTPEKSLLRPLKKKAGRNNQGKLTVRHHGGGHKRQYRVIDFKRNKDGIPGRVATIEYDPNRSANIALINYADGEKRYIIAAKGLEVGQTIYSGAEADIKVGNALELKDIPVGTVIHNIEMKPGKGGQLVRSAGTSAQVLGKEGKYVLIRLNSGEVRMILATCRATIGQVGNEQHELINIGKAGRSRWMGKRPTVRGSVMNPNDHPHGGGEGKAPIGRKSPMSPWGKPTLGYKTRKKNNNSDKFIVRRRKKK</sequence>
<comment type="function">
    <text evidence="1">One of the primary rRNA binding proteins. Required for association of the 30S and 50S subunits to form the 70S ribosome, for tRNA binding and peptide bond formation. It has been suggested to have peptidyltransferase activity; this is somewhat controversial. Makes several contacts with the 16S rRNA in the 70S ribosome.</text>
</comment>
<comment type="subunit">
    <text evidence="1">Part of the 50S ribosomal subunit. Forms a bridge to the 30S subunit in the 70S ribosome.</text>
</comment>
<comment type="similarity">
    <text evidence="1">Belongs to the universal ribosomal protein uL2 family.</text>
</comment>
<evidence type="ECO:0000255" key="1">
    <source>
        <dbReference type="HAMAP-Rule" id="MF_01320"/>
    </source>
</evidence>
<evidence type="ECO:0000256" key="2">
    <source>
        <dbReference type="SAM" id="MobiDB-lite"/>
    </source>
</evidence>
<evidence type="ECO:0000305" key="3"/>
<gene>
    <name evidence="1" type="primary">rplB</name>
    <name type="ordered locus">Lm4b_02596</name>
</gene>
<name>RL2_LISMC</name>